<evidence type="ECO:0000255" key="1">
    <source>
        <dbReference type="HAMAP-Rule" id="MF_00869"/>
    </source>
</evidence>
<evidence type="ECO:0000269" key="2">
    <source>
    </source>
</evidence>
<evidence type="ECO:0000303" key="3">
    <source>
    </source>
</evidence>
<evidence type="ECO:0000305" key="4"/>
<gene>
    <name evidence="1 3" type="primary">fsx1</name>
</gene>
<organism>
    <name type="scientific">Haloferax sp. (strain Q22)</name>
    <dbReference type="NCBI Taxonomy" id="1526048"/>
    <lineage>
        <taxon>Archaea</taxon>
        <taxon>Methanobacteriati</taxon>
        <taxon>Methanobacteriota</taxon>
        <taxon>Stenosarchaea group</taxon>
        <taxon>Halobacteria</taxon>
        <taxon>Halobacteriales</taxon>
        <taxon>Haloferacaceae</taxon>
        <taxon>Haloferax</taxon>
    </lineage>
</organism>
<feature type="signal peptide" evidence="1">
    <location>
        <begin position="1"/>
        <end position="23"/>
    </location>
</feature>
<feature type="chain" id="PRO_0000458004" description="Fusexin 1" evidence="1">
    <location>
        <begin position="24"/>
        <end position="653"/>
    </location>
</feature>
<feature type="topological domain" description="Extracellular" evidence="4">
    <location>
        <begin position="24"/>
        <end position="559"/>
    </location>
</feature>
<feature type="transmembrane region" description="Helical" evidence="1">
    <location>
        <begin position="560"/>
        <end position="580"/>
    </location>
</feature>
<feature type="topological domain" description="Cytoplasmic" evidence="4">
    <location>
        <begin position="581"/>
        <end position="600"/>
    </location>
</feature>
<feature type="transmembrane region" description="Helical" evidence="1">
    <location>
        <begin position="601"/>
        <end position="621"/>
    </location>
</feature>
<feature type="transmembrane region" description="Helical" evidence="1">
    <location>
        <begin position="622"/>
        <end position="642"/>
    </location>
</feature>
<feature type="topological domain" description="Cytoplasmic" evidence="4">
    <location>
        <begin position="643"/>
        <end position="653"/>
    </location>
</feature>
<feature type="region of interest" description="Fusion loop" evidence="1">
    <location>
        <begin position="154"/>
        <end position="159"/>
    </location>
</feature>
<feature type="disulfide bond" evidence="1">
    <location>
        <begin position="126"/>
        <end position="166"/>
    </location>
</feature>
<feature type="disulfide bond" evidence="1">
    <location>
        <begin position="397"/>
        <end position="440"/>
    </location>
</feature>
<feature type="disulfide bond" evidence="1">
    <location>
        <begin position="467"/>
        <end position="490"/>
    </location>
</feature>
<feature type="disulfide bond" evidence="1">
    <location>
        <begin position="502"/>
        <end position="519"/>
    </location>
</feature>
<keyword id="KW-0106">Calcium</keyword>
<keyword id="KW-1003">Cell membrane</keyword>
<keyword id="KW-1015">Disulfide bond</keyword>
<keyword id="KW-0472">Membrane</keyword>
<keyword id="KW-0479">Metal-binding</keyword>
<keyword id="KW-0732">Signal</keyword>
<keyword id="KW-0812">Transmembrane</keyword>
<keyword id="KW-1133">Transmembrane helix</keyword>
<sequence length="653" mass="70281">MKNGLKASVVALFFLLAASSASAATNSVDTVTYESNSDFFDGQVLQVGYTSNFATDKINVYLSESKIESETGAVADEPITFDVSHQNTYAKYPTQDTGLESITGWDAVKKTVSSKQELWDWTTTNCVDTNDAGTFTVDGYGTTDVDARANRWFDTWTGQYKYTIYCWQRNDYYGAVADIGSPDEVFRTEWRLQAGDKNPQTAVITNGDGGTGVTSNLGRYAKVSWEGSLSTGENPPLVDDEYALHSNDYEGGWRVISESRYSSYQSFVQNNADDLLGEWGAGLTTESHIESEMNGKAEEAASEFTESPLSDSEILDSSFQNGAFKLDMERSLMYPEFSVYVDAGENGYATISKPVGKPEIVSTSGAEFGELGQGTISVEAENVGDSEGSFSARTDSCGEYFSGNSLQDTQRVSPGGTASFDFRVTFTSTSMTQSEFSDQCEVVVEDTGSGNEVSASVSVTATQEDECTEGDETKKEKQVNGETVDVIMSCTNGLKLEEDEVCSADEEARYIDDDVQYECRDKDSPPGGGGGDPWTIPGLGWQLDTPFGGMEKALSGNAGALTWAQLLLSFIGFLAGFALVGVKLGKMVDGLATEFIPLSDAVVRLGIGLVGGGMAFMAVYQLVTNPLGFLLTVVGLLLTGYLYLKGTTPDINL</sequence>
<proteinExistence type="inferred from homology"/>
<accession>P0DW64</accession>
<protein>
    <recommendedName>
        <fullName evidence="1 3">Fusexin 1</fullName>
        <shortName evidence="3">HQ22Fsx1</shortName>
    </recommendedName>
</protein>
<comment type="function">
    <text evidence="2">Exhibits fusogenic activity (PubMed:35794124). Mediates cell-cell fusion in mammalian cells (bilateral fusion) (PubMed:35794124).</text>
</comment>
<comment type="subunit">
    <text evidence="1">Homotrimer stabilized by interdomain contacts and numerous Ca(2+) and Na(+) ions.</text>
</comment>
<comment type="subcellular location">
    <subcellularLocation>
        <location evidence="1">Cell surface</location>
    </subcellularLocation>
    <subcellularLocation>
        <location evidence="1">Cell membrane</location>
        <topology evidence="1">Multi-pass membrane protein</topology>
    </subcellularLocation>
</comment>
<comment type="domain">
    <text evidence="1">The extracellular N-terminus has 4 domains; the first 3 are structurally similar to fusogens from plants, C.elegans and viruses, while the fourth domain is unique to archaea. Domains I and II are discontinuous. The fusion loop in domain II is stabilized by a Ca(2+) ion so that it protrudes from the molecule.</text>
</comment>
<comment type="similarity">
    <text evidence="1">Belongs to the HAP2/GCS1 family. Fusexin 1 subfamily.</text>
</comment>
<name>FSX1_HALS0</name>
<dbReference type="EMBL" id="LOEP01000012">
    <property type="status" value="NOT_ANNOTATED_CDS"/>
    <property type="molecule type" value="Genomic_DNA"/>
</dbReference>
<dbReference type="RefSeq" id="WP_058826362.1">
    <property type="nucleotide sequence ID" value="NZ_LOEP01000012.1"/>
</dbReference>
<dbReference type="SMR" id="P0DW64"/>
<dbReference type="OrthoDB" id="379519at2157"/>
<dbReference type="GO" id="GO:0009986">
    <property type="term" value="C:cell surface"/>
    <property type="evidence" value="ECO:0007669"/>
    <property type="project" value="UniProtKB-SubCell"/>
</dbReference>
<dbReference type="GO" id="GO:0005886">
    <property type="term" value="C:plasma membrane"/>
    <property type="evidence" value="ECO:0007669"/>
    <property type="project" value="UniProtKB-SubCell"/>
</dbReference>
<dbReference type="GO" id="GO:0046872">
    <property type="term" value="F:metal ion binding"/>
    <property type="evidence" value="ECO:0007669"/>
    <property type="project" value="UniProtKB-KW"/>
</dbReference>
<dbReference type="GO" id="GO:0045026">
    <property type="term" value="P:plasma membrane fusion"/>
    <property type="evidence" value="ECO:0000314"/>
    <property type="project" value="UniProtKB"/>
</dbReference>
<dbReference type="HAMAP" id="MF_00869">
    <property type="entry name" value="Fusexin_1"/>
    <property type="match status" value="1"/>
</dbReference>
<dbReference type="InterPro" id="IPR049902">
    <property type="entry name" value="Fsx1"/>
</dbReference>
<reference key="1">
    <citation type="submission" date="2015-12" db="EMBL/GenBank/DDBJ databases">
        <title>Genome sequence of Haloferax sp. strain Q22.</title>
        <authorList>
            <person name="Chen S.X."/>
            <person name="Xiang H."/>
        </authorList>
    </citation>
    <scope>NUCLEOTIDE SEQUENCE [LARGE SCALE GENOMIC DNA]</scope>
</reference>
<reference key="2">
    <citation type="journal article" date="2022" name="Nat. Commun.">
        <title>Discovery of archaeal fusexins homologous to eukaryotic HAP2/GCS1 gamete fusion proteins.</title>
        <authorList>
            <person name="Moi D."/>
            <person name="Nishio S."/>
            <person name="Li X."/>
            <person name="Valansi C."/>
            <person name="Langleib M."/>
            <person name="Brukman N.G."/>
            <person name="Flyak K."/>
            <person name="Dessimoz C."/>
            <person name="de Sanctis D."/>
            <person name="Tunyasuvunakool K."/>
            <person name="Jumper J."/>
            <person name="Grana M."/>
            <person name="Romero H."/>
            <person name="Aguilar P.S."/>
            <person name="Jovine L."/>
            <person name="Podbilewicz B."/>
        </authorList>
    </citation>
    <scope>FUNCTION</scope>
</reference>